<accession>Q5LZU2</accession>
<dbReference type="EC" id="7.3.2.1" evidence="1"/>
<dbReference type="EMBL" id="CP000024">
    <property type="protein sequence ID" value="AAV62583.1"/>
    <property type="molecule type" value="Genomic_DNA"/>
</dbReference>
<dbReference type="SMR" id="Q5LZU2"/>
<dbReference type="KEGG" id="stc:str1005"/>
<dbReference type="HOGENOM" id="CLU_000604_1_22_9"/>
<dbReference type="GO" id="GO:0005886">
    <property type="term" value="C:plasma membrane"/>
    <property type="evidence" value="ECO:0007669"/>
    <property type="project" value="UniProtKB-SubCell"/>
</dbReference>
<dbReference type="GO" id="GO:0005524">
    <property type="term" value="F:ATP binding"/>
    <property type="evidence" value="ECO:0007669"/>
    <property type="project" value="UniProtKB-KW"/>
</dbReference>
<dbReference type="GO" id="GO:0016887">
    <property type="term" value="F:ATP hydrolysis activity"/>
    <property type="evidence" value="ECO:0007669"/>
    <property type="project" value="InterPro"/>
</dbReference>
<dbReference type="GO" id="GO:0015415">
    <property type="term" value="F:ATPase-coupled phosphate ion transmembrane transporter activity"/>
    <property type="evidence" value="ECO:0007669"/>
    <property type="project" value="UniProtKB-EC"/>
</dbReference>
<dbReference type="GO" id="GO:0035435">
    <property type="term" value="P:phosphate ion transmembrane transport"/>
    <property type="evidence" value="ECO:0007669"/>
    <property type="project" value="InterPro"/>
</dbReference>
<dbReference type="CDD" id="cd03260">
    <property type="entry name" value="ABC_PstB_phosphate_transporter"/>
    <property type="match status" value="1"/>
</dbReference>
<dbReference type="Gene3D" id="3.40.50.300">
    <property type="entry name" value="P-loop containing nucleotide triphosphate hydrolases"/>
    <property type="match status" value="1"/>
</dbReference>
<dbReference type="InterPro" id="IPR003593">
    <property type="entry name" value="AAA+_ATPase"/>
</dbReference>
<dbReference type="InterPro" id="IPR003439">
    <property type="entry name" value="ABC_transporter-like_ATP-bd"/>
</dbReference>
<dbReference type="InterPro" id="IPR017871">
    <property type="entry name" value="ABC_transporter-like_CS"/>
</dbReference>
<dbReference type="InterPro" id="IPR027417">
    <property type="entry name" value="P-loop_NTPase"/>
</dbReference>
<dbReference type="InterPro" id="IPR005670">
    <property type="entry name" value="PstB-like"/>
</dbReference>
<dbReference type="NCBIfam" id="TIGR00972">
    <property type="entry name" value="3a0107s01c2"/>
    <property type="match status" value="1"/>
</dbReference>
<dbReference type="PANTHER" id="PTHR43423">
    <property type="entry name" value="ABC TRANSPORTER I FAMILY MEMBER 17"/>
    <property type="match status" value="1"/>
</dbReference>
<dbReference type="PANTHER" id="PTHR43423:SF1">
    <property type="entry name" value="ABC TRANSPORTER I FAMILY MEMBER 17"/>
    <property type="match status" value="1"/>
</dbReference>
<dbReference type="Pfam" id="PF00005">
    <property type="entry name" value="ABC_tran"/>
    <property type="match status" value="1"/>
</dbReference>
<dbReference type="SMART" id="SM00382">
    <property type="entry name" value="AAA"/>
    <property type="match status" value="1"/>
</dbReference>
<dbReference type="SUPFAM" id="SSF52540">
    <property type="entry name" value="P-loop containing nucleoside triphosphate hydrolases"/>
    <property type="match status" value="1"/>
</dbReference>
<dbReference type="PROSITE" id="PS00211">
    <property type="entry name" value="ABC_TRANSPORTER_1"/>
    <property type="match status" value="1"/>
</dbReference>
<dbReference type="PROSITE" id="PS50893">
    <property type="entry name" value="ABC_TRANSPORTER_2"/>
    <property type="match status" value="1"/>
</dbReference>
<dbReference type="PROSITE" id="PS51238">
    <property type="entry name" value="PSTB"/>
    <property type="match status" value="1"/>
</dbReference>
<comment type="function">
    <text evidence="1">Part of the ABC transporter complex PstSACB involved in phosphate import. Responsible for energy coupling to the transport system.</text>
</comment>
<comment type="catalytic activity">
    <reaction evidence="1">
        <text>phosphate(out) + ATP + H2O = ADP + 2 phosphate(in) + H(+)</text>
        <dbReference type="Rhea" id="RHEA:24440"/>
        <dbReference type="ChEBI" id="CHEBI:15377"/>
        <dbReference type="ChEBI" id="CHEBI:15378"/>
        <dbReference type="ChEBI" id="CHEBI:30616"/>
        <dbReference type="ChEBI" id="CHEBI:43474"/>
        <dbReference type="ChEBI" id="CHEBI:456216"/>
        <dbReference type="EC" id="7.3.2.1"/>
    </reaction>
</comment>
<comment type="subunit">
    <text evidence="1">The complex is composed of two ATP-binding proteins (PstB), two transmembrane proteins (PstC and PstA) and a solute-binding protein (PstS).</text>
</comment>
<comment type="subcellular location">
    <subcellularLocation>
        <location evidence="1">Cell membrane</location>
        <topology evidence="1">Peripheral membrane protein</topology>
    </subcellularLocation>
</comment>
<comment type="similarity">
    <text evidence="1">Belongs to the ABC transporter superfamily. Phosphate importer (TC 3.A.1.7) family.</text>
</comment>
<keyword id="KW-0067">ATP-binding</keyword>
<keyword id="KW-1003">Cell membrane</keyword>
<keyword id="KW-0472">Membrane</keyword>
<keyword id="KW-0547">Nucleotide-binding</keyword>
<keyword id="KW-0592">Phosphate transport</keyword>
<keyword id="KW-1278">Translocase</keyword>
<keyword id="KW-0813">Transport</keyword>
<reference key="1">
    <citation type="journal article" date="2004" name="Nat. Biotechnol.">
        <title>Complete sequence and comparative genome analysis of the dairy bacterium Streptococcus thermophilus.</title>
        <authorList>
            <person name="Bolotin A."/>
            <person name="Quinquis B."/>
            <person name="Renault P."/>
            <person name="Sorokin A."/>
            <person name="Ehrlich S.D."/>
            <person name="Kulakauskas S."/>
            <person name="Lapidus A."/>
            <person name="Goltsman E."/>
            <person name="Mazur M."/>
            <person name="Pusch G.D."/>
            <person name="Fonstein M."/>
            <person name="Overbeek R."/>
            <person name="Kyprides N."/>
            <person name="Purnelle B."/>
            <person name="Prozzi D."/>
            <person name="Ngui K."/>
            <person name="Masuy D."/>
            <person name="Hancy F."/>
            <person name="Burteau S."/>
            <person name="Boutry M."/>
            <person name="Delcour J."/>
            <person name="Goffeau A."/>
            <person name="Hols P."/>
        </authorList>
    </citation>
    <scope>NUCLEOTIDE SEQUENCE [LARGE SCALE GENOMIC DNA]</scope>
    <source>
        <strain>CNRZ 1066</strain>
    </source>
</reference>
<proteinExistence type="inferred from homology"/>
<organism>
    <name type="scientific">Streptococcus thermophilus (strain CNRZ 1066)</name>
    <dbReference type="NCBI Taxonomy" id="299768"/>
    <lineage>
        <taxon>Bacteria</taxon>
        <taxon>Bacillati</taxon>
        <taxon>Bacillota</taxon>
        <taxon>Bacilli</taxon>
        <taxon>Lactobacillales</taxon>
        <taxon>Streptococcaceae</taxon>
        <taxon>Streptococcus</taxon>
    </lineage>
</organism>
<protein>
    <recommendedName>
        <fullName evidence="1">Phosphate import ATP-binding protein PstB 2</fullName>
        <ecNumber evidence="1">7.3.2.1</ecNumber>
    </recommendedName>
    <alternativeName>
        <fullName evidence="1">ABC phosphate transporter 2</fullName>
    </alternativeName>
    <alternativeName>
        <fullName evidence="1">Phosphate-transporting ATPase 2</fullName>
    </alternativeName>
</protein>
<sequence length="252" mass="28000">MTEPIISINDLSVYFNKKKAINNVTMDFYPNEITALIGPSGSGKSTLLRSINRMGDLNPECTVTGAVSYNGHNVYSPRTDTVELRKEIGMVFQQPNPFPMSIYENVVYGLRINGIKDKAVLDKAVEESLKGASVWEEVKDRLHDSALGLSGGQQQRVCVARVLATSPKVILLDEPTSALDPISAGKIEETLYNLKDQYTLLLVTRSMQQASRISQRTAFFLDGELIEYSSTKDMFLNPQHKETEDYITGKLG</sequence>
<evidence type="ECO:0000255" key="1">
    <source>
        <dbReference type="HAMAP-Rule" id="MF_01702"/>
    </source>
</evidence>
<gene>
    <name evidence="1" type="primary">pstB2</name>
    <name type="ordered locus">str1005</name>
</gene>
<name>PSTB2_STRT1</name>
<feature type="chain" id="PRO_0000272554" description="Phosphate import ATP-binding protein PstB 2">
    <location>
        <begin position="1"/>
        <end position="252"/>
    </location>
</feature>
<feature type="domain" description="ABC transporter" evidence="1">
    <location>
        <begin position="6"/>
        <end position="247"/>
    </location>
</feature>
<feature type="binding site" evidence="1">
    <location>
        <begin position="38"/>
        <end position="45"/>
    </location>
    <ligand>
        <name>ATP</name>
        <dbReference type="ChEBI" id="CHEBI:30616"/>
    </ligand>
</feature>